<accession>P0A3V7</accession>
<accession>P05350</accession>
<proteinExistence type="inferred from homology"/>
<protein>
    <recommendedName>
        <fullName>Protein virB1</fullName>
    </recommendedName>
</protein>
<geneLocation type="plasmid">
    <name>pTi15955</name>
</geneLocation>
<gene>
    <name type="primary">virB1</name>
</gene>
<reference key="1">
    <citation type="journal article" date="1988" name="Nucleic Acids Res.">
        <title>Analysis of the complete nucleotide sequence of the Agrobacterium tumefaciens virB operon.</title>
        <authorList>
            <person name="Thompson D.V."/>
            <person name="Melchers L.S."/>
            <person name="Idler K.B."/>
            <person name="Shilperoort R.A."/>
            <person name="Hooykaas P.J.J."/>
        </authorList>
    </citation>
    <scope>NUCLEOTIDE SEQUENCE [GENOMIC DNA]</scope>
</reference>
<dbReference type="EMBL" id="X06826">
    <property type="protein sequence ID" value="CAA29972.1"/>
    <property type="molecule type" value="Genomic_DNA"/>
</dbReference>
<dbReference type="PIR" id="S00777">
    <property type="entry name" value="B1AG55"/>
</dbReference>
<dbReference type="RefSeq" id="NP_059799.1">
    <property type="nucleotide sequence ID" value="NC_002377.1"/>
</dbReference>
<dbReference type="CDD" id="cd16892">
    <property type="entry name" value="LT_VirB1-like"/>
    <property type="match status" value="1"/>
</dbReference>
<dbReference type="Gene3D" id="1.10.530.10">
    <property type="match status" value="1"/>
</dbReference>
<dbReference type="InterPro" id="IPR023346">
    <property type="entry name" value="Lysozyme-like_dom_sf"/>
</dbReference>
<dbReference type="InterPro" id="IPR008258">
    <property type="entry name" value="Transglycosylase_SLT_dom_1"/>
</dbReference>
<dbReference type="NCBIfam" id="NF010438">
    <property type="entry name" value="PRK13864.1"/>
    <property type="match status" value="1"/>
</dbReference>
<dbReference type="Pfam" id="PF01464">
    <property type="entry name" value="SLT"/>
    <property type="match status" value="1"/>
</dbReference>
<dbReference type="SUPFAM" id="SSF53955">
    <property type="entry name" value="Lysozyme-like"/>
    <property type="match status" value="1"/>
</dbReference>
<organism>
    <name type="scientific">Agrobacterium tumefaciens (strain 15955)</name>
    <dbReference type="NCBI Taxonomy" id="190386"/>
    <lineage>
        <taxon>Bacteria</taxon>
        <taxon>Pseudomonadati</taxon>
        <taxon>Pseudomonadota</taxon>
        <taxon>Alphaproteobacteria</taxon>
        <taxon>Hyphomicrobiales</taxon>
        <taxon>Rhizobiaceae</taxon>
        <taxon>Rhizobium/Agrobacterium group</taxon>
        <taxon>Agrobacterium</taxon>
        <taxon>Agrobacterium tumefaciens complex</taxon>
    </lineage>
</organism>
<keyword id="KW-0192">Crown gall tumor</keyword>
<keyword id="KW-0614">Plasmid</keyword>
<keyword id="KW-0732">Signal</keyword>
<name>VIRB1_AGRT9</name>
<comment type="function">
    <text>VirB proteins are suggested to act at the bacterial surface and there play an important role in directing T-DNA transfer to plant cells.</text>
</comment>
<comment type="similarity">
    <text evidence="3">Belongs to the virb1 family.</text>
</comment>
<sequence>MFKRSGSLSLALMSSFCSSSLATPLSSAEFDHVARKCAPSVATSTLAAIAKVESRFDPLAIHDNTTGETLHWQDHTQATQVVRHRLDARHSLDVGLMQINSRNFSMLGLTPDGALKACPSLSAAANMLKSRYAGGETIDEKQIALRRAISAYNTGNFIRGFANGYVRKVETAAQSLVPALIEPPQDDHKALKSEDTWDVWGSYQRRSQEDGVGGSIAPQPPDQDNGKSADDNQVLFDLY</sequence>
<feature type="signal peptide" evidence="1">
    <location>
        <begin position="1"/>
        <end position="28"/>
    </location>
</feature>
<feature type="chain" id="PRO_0000022658" description="Protein virB1">
    <location>
        <begin position="29"/>
        <end position="239"/>
    </location>
</feature>
<feature type="region of interest" description="Disordered" evidence="2">
    <location>
        <begin position="202"/>
        <end position="232"/>
    </location>
</feature>
<evidence type="ECO:0000255" key="1"/>
<evidence type="ECO:0000256" key="2">
    <source>
        <dbReference type="SAM" id="MobiDB-lite"/>
    </source>
</evidence>
<evidence type="ECO:0000305" key="3"/>